<reference key="1">
    <citation type="journal article" date="2000" name="Nature">
        <title>The genome sequence of the thermoacidophilic scavenger Thermoplasma acidophilum.</title>
        <authorList>
            <person name="Ruepp A."/>
            <person name="Graml W."/>
            <person name="Santos-Martinez M.-L."/>
            <person name="Koretke K.K."/>
            <person name="Volker C."/>
            <person name="Mewes H.-W."/>
            <person name="Frishman D."/>
            <person name="Stocker S."/>
            <person name="Lupas A.N."/>
            <person name="Baumeister W."/>
        </authorList>
    </citation>
    <scope>NUCLEOTIDE SEQUENCE [LARGE SCALE GENOMIC DNA]</scope>
    <source>
        <strain>ATCC 25905 / DSM 1728 / JCM 9062 / NBRC 15155 / AMRC-C165</strain>
    </source>
</reference>
<organism>
    <name type="scientific">Thermoplasma acidophilum (strain ATCC 25905 / DSM 1728 / JCM 9062 / NBRC 15155 / AMRC-C165)</name>
    <dbReference type="NCBI Taxonomy" id="273075"/>
    <lineage>
        <taxon>Archaea</taxon>
        <taxon>Methanobacteriati</taxon>
        <taxon>Thermoplasmatota</taxon>
        <taxon>Thermoplasmata</taxon>
        <taxon>Thermoplasmatales</taxon>
        <taxon>Thermoplasmataceae</taxon>
        <taxon>Thermoplasma</taxon>
    </lineage>
</organism>
<proteinExistence type="inferred from homology"/>
<sequence length="235" mass="27050">MPELRTCHGPYRGRECPVCGKPGKILMNEREVDEVSRTLAAILRHDPERYHIRLDSHGYARIAGIVTVLRKYKGMKWITFDHILSLAETDPKGRYQVSGVLIRAMYGHTIPVDLSDLPEDNIPDVLYYQSSAAEAPLVKEAGIYPSDKTWVHLSGTYRRSYVSGLYHIDDPFILRIDARSMIDSGHDIYRSSDDIYLTREIPPEYIQDAEPEEVTLTEEEKMDIDRVRNKNKKDQ</sequence>
<feature type="chain" id="PRO_0000157495" description="Probable RNA 2'-phosphotransferase">
    <location>
        <begin position="1"/>
        <end position="235"/>
    </location>
</feature>
<feature type="region of interest" description="Disordered" evidence="2">
    <location>
        <begin position="208"/>
        <end position="235"/>
    </location>
</feature>
<feature type="compositionally biased region" description="Acidic residues" evidence="2">
    <location>
        <begin position="208"/>
        <end position="222"/>
    </location>
</feature>
<feature type="compositionally biased region" description="Basic and acidic residues" evidence="2">
    <location>
        <begin position="223"/>
        <end position="235"/>
    </location>
</feature>
<evidence type="ECO:0000250" key="1"/>
<evidence type="ECO:0000256" key="2">
    <source>
        <dbReference type="SAM" id="MobiDB-lite"/>
    </source>
</evidence>
<evidence type="ECO:0000305" key="3"/>
<dbReference type="EC" id="2.7.1.-"/>
<dbReference type="EMBL" id="AL445063">
    <property type="protein sequence ID" value="CAC11265.1"/>
    <property type="status" value="ALT_INIT"/>
    <property type="molecule type" value="Genomic_DNA"/>
</dbReference>
<dbReference type="RefSeq" id="WP_010900545.1">
    <property type="nucleotide sequence ID" value="NC_002578.1"/>
</dbReference>
<dbReference type="SMR" id="P57718"/>
<dbReference type="STRING" id="273075.gene:9571332"/>
<dbReference type="PaxDb" id="273075-Ta0118m"/>
<dbReference type="EnsemblBacteria" id="CAC11265">
    <property type="protein sequence ID" value="CAC11265"/>
    <property type="gene ID" value="CAC11265"/>
</dbReference>
<dbReference type="KEGG" id="tac:Ta0118"/>
<dbReference type="eggNOG" id="arCOG04063">
    <property type="taxonomic scope" value="Archaea"/>
</dbReference>
<dbReference type="HOGENOM" id="CLU_052998_4_1_2"/>
<dbReference type="InParanoid" id="P57718"/>
<dbReference type="OrthoDB" id="24376at2157"/>
<dbReference type="Proteomes" id="UP000001024">
    <property type="component" value="Chromosome"/>
</dbReference>
<dbReference type="GO" id="GO:0003950">
    <property type="term" value="F:NAD+ poly-ADP-ribosyltransferase activity"/>
    <property type="evidence" value="ECO:0007669"/>
    <property type="project" value="InterPro"/>
</dbReference>
<dbReference type="GO" id="GO:0000215">
    <property type="term" value="F:tRNA 2'-phosphotransferase activity"/>
    <property type="evidence" value="ECO:0007669"/>
    <property type="project" value="TreeGrafter"/>
</dbReference>
<dbReference type="GO" id="GO:0006388">
    <property type="term" value="P:tRNA splicing, via endonucleolytic cleavage and ligation"/>
    <property type="evidence" value="ECO:0007669"/>
    <property type="project" value="UniProtKB-UniRule"/>
</dbReference>
<dbReference type="Gene3D" id="3.20.170.30">
    <property type="match status" value="1"/>
</dbReference>
<dbReference type="Gene3D" id="1.10.10.970">
    <property type="entry name" value="RNA 2'-phosphotransferase, Tpt1/KptA family, N-terminal domain"/>
    <property type="match status" value="1"/>
</dbReference>
<dbReference type="HAMAP" id="MF_00299">
    <property type="entry name" value="KptA"/>
    <property type="match status" value="1"/>
</dbReference>
<dbReference type="InterPro" id="IPR002745">
    <property type="entry name" value="Ptrans_KptA/Tpt1"/>
</dbReference>
<dbReference type="InterPro" id="IPR042081">
    <property type="entry name" value="RNA_2'-PTrans_C"/>
</dbReference>
<dbReference type="InterPro" id="IPR022928">
    <property type="entry name" value="RNA_2'-PTrans_KptA"/>
</dbReference>
<dbReference type="InterPro" id="IPR042080">
    <property type="entry name" value="RNA_2'-PTrans_N"/>
</dbReference>
<dbReference type="PANTHER" id="PTHR12684">
    <property type="entry name" value="PUTATIVE PHOSPHOTRANSFERASE"/>
    <property type="match status" value="1"/>
</dbReference>
<dbReference type="PANTHER" id="PTHR12684:SF2">
    <property type="entry name" value="TRNA 2'-PHOSPHOTRANSFERASE 1"/>
    <property type="match status" value="1"/>
</dbReference>
<dbReference type="Pfam" id="PF01885">
    <property type="entry name" value="PTS_2-RNA"/>
    <property type="match status" value="1"/>
</dbReference>
<dbReference type="SUPFAM" id="SSF56399">
    <property type="entry name" value="ADP-ribosylation"/>
    <property type="match status" value="1"/>
</dbReference>
<protein>
    <recommendedName>
        <fullName>Probable RNA 2'-phosphotransferase</fullName>
        <ecNumber>2.7.1.-</ecNumber>
    </recommendedName>
</protein>
<accession>P57718</accession>
<accession>Q9HLV7</accession>
<gene>
    <name type="primary">kptA</name>
    <name type="ordered locus">Ta0118</name>
</gene>
<comment type="function">
    <text evidence="1">Removes the 2'-phosphate from RNA via an intermediate in which the phosphate is ADP-ribosylated by NAD followed by a presumed transesterification to release the RNA and generate ADP-ribose 1''-2''-cyclic phosphate (APPR&gt;P). May function as an ADP-ribosylase (By similarity).</text>
</comment>
<comment type="similarity">
    <text evidence="3">Belongs to the KptA/TPT1 family.</text>
</comment>
<comment type="sequence caution" evidence="3">
    <conflict type="erroneous initiation">
        <sequence resource="EMBL-CDS" id="CAC11265"/>
    </conflict>
</comment>
<keyword id="KW-0520">NAD</keyword>
<keyword id="KW-1185">Reference proteome</keyword>
<keyword id="KW-0808">Transferase</keyword>
<name>KPTA_THEAC</name>